<accession>Q8LER3</accession>
<accession>Q9T067</accession>
<keyword id="KW-0052">Apoplast</keyword>
<keyword id="KW-0134">Cell wall</keyword>
<keyword id="KW-0961">Cell wall biogenesis/degradation</keyword>
<keyword id="KW-1015">Disulfide bond</keyword>
<keyword id="KW-0325">Glycoprotein</keyword>
<keyword id="KW-0326">Glycosidase</keyword>
<keyword id="KW-0378">Hydrolase</keyword>
<keyword id="KW-1185">Reference proteome</keyword>
<keyword id="KW-0964">Secreted</keyword>
<keyword id="KW-0732">Signal</keyword>
<keyword id="KW-0808">Transferase</keyword>
<reference key="1">
    <citation type="journal article" date="1999" name="Nature">
        <title>Sequence and analysis of chromosome 4 of the plant Arabidopsis thaliana.</title>
        <authorList>
            <person name="Mayer K.F.X."/>
            <person name="Schueller C."/>
            <person name="Wambutt R."/>
            <person name="Murphy G."/>
            <person name="Volckaert G."/>
            <person name="Pohl T."/>
            <person name="Duesterhoeft A."/>
            <person name="Stiekema W."/>
            <person name="Entian K.-D."/>
            <person name="Terryn N."/>
            <person name="Harris B."/>
            <person name="Ansorge W."/>
            <person name="Brandt P."/>
            <person name="Grivell L.A."/>
            <person name="Rieger M."/>
            <person name="Weichselgartner M."/>
            <person name="de Simone V."/>
            <person name="Obermaier B."/>
            <person name="Mache R."/>
            <person name="Mueller M."/>
            <person name="Kreis M."/>
            <person name="Delseny M."/>
            <person name="Puigdomenech P."/>
            <person name="Watson M."/>
            <person name="Schmidtheini T."/>
            <person name="Reichert B."/>
            <person name="Portetelle D."/>
            <person name="Perez-Alonso M."/>
            <person name="Boutry M."/>
            <person name="Bancroft I."/>
            <person name="Vos P."/>
            <person name="Hoheisel J."/>
            <person name="Zimmermann W."/>
            <person name="Wedler H."/>
            <person name="Ridley P."/>
            <person name="Langham S.-A."/>
            <person name="McCullagh B."/>
            <person name="Bilham L."/>
            <person name="Robben J."/>
            <person name="van der Schueren J."/>
            <person name="Grymonprez B."/>
            <person name="Chuang Y.-J."/>
            <person name="Vandenbussche F."/>
            <person name="Braeken M."/>
            <person name="Weltjens I."/>
            <person name="Voet M."/>
            <person name="Bastiaens I."/>
            <person name="Aert R."/>
            <person name="Defoor E."/>
            <person name="Weitzenegger T."/>
            <person name="Bothe G."/>
            <person name="Ramsperger U."/>
            <person name="Hilbert H."/>
            <person name="Braun M."/>
            <person name="Holzer E."/>
            <person name="Brandt A."/>
            <person name="Peters S."/>
            <person name="van Staveren M."/>
            <person name="Dirkse W."/>
            <person name="Mooijman P."/>
            <person name="Klein Lankhorst R."/>
            <person name="Rose M."/>
            <person name="Hauf J."/>
            <person name="Koetter P."/>
            <person name="Berneiser S."/>
            <person name="Hempel S."/>
            <person name="Feldpausch M."/>
            <person name="Lamberth S."/>
            <person name="Van den Daele H."/>
            <person name="De Keyser A."/>
            <person name="Buysshaert C."/>
            <person name="Gielen J."/>
            <person name="Villarroel R."/>
            <person name="De Clercq R."/>
            <person name="van Montagu M."/>
            <person name="Rogers J."/>
            <person name="Cronin A."/>
            <person name="Quail M.A."/>
            <person name="Bray-Allen S."/>
            <person name="Clark L."/>
            <person name="Doggett J."/>
            <person name="Hall S."/>
            <person name="Kay M."/>
            <person name="Lennard N."/>
            <person name="McLay K."/>
            <person name="Mayes R."/>
            <person name="Pettett A."/>
            <person name="Rajandream M.A."/>
            <person name="Lyne M."/>
            <person name="Benes V."/>
            <person name="Rechmann S."/>
            <person name="Borkova D."/>
            <person name="Bloecker H."/>
            <person name="Scharfe M."/>
            <person name="Grimm M."/>
            <person name="Loehnert T.-H."/>
            <person name="Dose S."/>
            <person name="de Haan M."/>
            <person name="Maarse A.C."/>
            <person name="Schaefer M."/>
            <person name="Mueller-Auer S."/>
            <person name="Gabel C."/>
            <person name="Fuchs M."/>
            <person name="Fartmann B."/>
            <person name="Granderath K."/>
            <person name="Dauner D."/>
            <person name="Herzl A."/>
            <person name="Neumann S."/>
            <person name="Argiriou A."/>
            <person name="Vitale D."/>
            <person name="Liguori R."/>
            <person name="Piravandi E."/>
            <person name="Massenet O."/>
            <person name="Quigley F."/>
            <person name="Clabauld G."/>
            <person name="Muendlein A."/>
            <person name="Felber R."/>
            <person name="Schnabl S."/>
            <person name="Hiller R."/>
            <person name="Schmidt W."/>
            <person name="Lecharny A."/>
            <person name="Aubourg S."/>
            <person name="Chefdor F."/>
            <person name="Cooke R."/>
            <person name="Berger C."/>
            <person name="Monfort A."/>
            <person name="Casacuberta E."/>
            <person name="Gibbons T."/>
            <person name="Weber N."/>
            <person name="Vandenbol M."/>
            <person name="Bargues M."/>
            <person name="Terol J."/>
            <person name="Torres A."/>
            <person name="Perez-Perez A."/>
            <person name="Purnelle B."/>
            <person name="Bent E."/>
            <person name="Johnson S."/>
            <person name="Tacon D."/>
            <person name="Jesse T."/>
            <person name="Heijnen L."/>
            <person name="Schwarz S."/>
            <person name="Scholler P."/>
            <person name="Heber S."/>
            <person name="Francs P."/>
            <person name="Bielke C."/>
            <person name="Frishman D."/>
            <person name="Haase D."/>
            <person name="Lemcke K."/>
            <person name="Mewes H.-W."/>
            <person name="Stocker S."/>
            <person name="Zaccaria P."/>
            <person name="Bevan M."/>
            <person name="Wilson R.K."/>
            <person name="de la Bastide M."/>
            <person name="Habermann K."/>
            <person name="Parnell L."/>
            <person name="Dedhia N."/>
            <person name="Gnoj L."/>
            <person name="Schutz K."/>
            <person name="Huang E."/>
            <person name="Spiegel L."/>
            <person name="Sekhon M."/>
            <person name="Murray J."/>
            <person name="Sheet P."/>
            <person name="Cordes M."/>
            <person name="Abu-Threideh J."/>
            <person name="Stoneking T."/>
            <person name="Kalicki J."/>
            <person name="Graves T."/>
            <person name="Harmon G."/>
            <person name="Edwards J."/>
            <person name="Latreille P."/>
            <person name="Courtney L."/>
            <person name="Cloud J."/>
            <person name="Abbott A."/>
            <person name="Scott K."/>
            <person name="Johnson D."/>
            <person name="Minx P."/>
            <person name="Bentley D."/>
            <person name="Fulton B."/>
            <person name="Miller N."/>
            <person name="Greco T."/>
            <person name="Kemp K."/>
            <person name="Kramer J."/>
            <person name="Fulton L."/>
            <person name="Mardis E."/>
            <person name="Dante M."/>
            <person name="Pepin K."/>
            <person name="Hillier L.W."/>
            <person name="Nelson J."/>
            <person name="Spieth J."/>
            <person name="Ryan E."/>
            <person name="Andrews S."/>
            <person name="Geisel C."/>
            <person name="Layman D."/>
            <person name="Du H."/>
            <person name="Ali J."/>
            <person name="Berghoff A."/>
            <person name="Jones K."/>
            <person name="Drone K."/>
            <person name="Cotton M."/>
            <person name="Joshu C."/>
            <person name="Antonoiu B."/>
            <person name="Zidanic M."/>
            <person name="Strong C."/>
            <person name="Sun H."/>
            <person name="Lamar B."/>
            <person name="Yordan C."/>
            <person name="Ma P."/>
            <person name="Zhong J."/>
            <person name="Preston R."/>
            <person name="Vil D."/>
            <person name="Shekher M."/>
            <person name="Matero A."/>
            <person name="Shah R."/>
            <person name="Swaby I.K."/>
            <person name="O'Shaughnessy A."/>
            <person name="Rodriguez M."/>
            <person name="Hoffman J."/>
            <person name="Till S."/>
            <person name="Granat S."/>
            <person name="Shohdy N."/>
            <person name="Hasegawa A."/>
            <person name="Hameed A."/>
            <person name="Lodhi M."/>
            <person name="Johnson A."/>
            <person name="Chen E."/>
            <person name="Marra M.A."/>
            <person name="Martienssen R."/>
            <person name="McCombie W.R."/>
        </authorList>
    </citation>
    <scope>NUCLEOTIDE SEQUENCE [LARGE SCALE GENOMIC DNA]</scope>
    <source>
        <strain>cv. Columbia</strain>
    </source>
</reference>
<reference key="2">
    <citation type="journal article" date="2017" name="Plant J.">
        <title>Araport11: a complete reannotation of the Arabidopsis thaliana reference genome.</title>
        <authorList>
            <person name="Cheng C.Y."/>
            <person name="Krishnakumar V."/>
            <person name="Chan A.P."/>
            <person name="Thibaud-Nissen F."/>
            <person name="Schobel S."/>
            <person name="Town C.D."/>
        </authorList>
    </citation>
    <scope>GENOME REANNOTATION</scope>
    <source>
        <strain>cv. Columbia</strain>
    </source>
</reference>
<reference key="3">
    <citation type="journal article" date="2003" name="Science">
        <title>Empirical analysis of transcriptional activity in the Arabidopsis genome.</title>
        <authorList>
            <person name="Yamada K."/>
            <person name="Lim J."/>
            <person name="Dale J.M."/>
            <person name="Chen H."/>
            <person name="Shinn P."/>
            <person name="Palm C.J."/>
            <person name="Southwick A.M."/>
            <person name="Wu H.C."/>
            <person name="Kim C.J."/>
            <person name="Nguyen M."/>
            <person name="Pham P.K."/>
            <person name="Cheuk R.F."/>
            <person name="Karlin-Newmann G."/>
            <person name="Liu S.X."/>
            <person name="Lam B."/>
            <person name="Sakano H."/>
            <person name="Wu T."/>
            <person name="Yu G."/>
            <person name="Miranda M."/>
            <person name="Quach H.L."/>
            <person name="Tripp M."/>
            <person name="Chang C.H."/>
            <person name="Lee J.M."/>
            <person name="Toriumi M.J."/>
            <person name="Chan M.M."/>
            <person name="Tang C.C."/>
            <person name="Onodera C.S."/>
            <person name="Deng J.M."/>
            <person name="Akiyama K."/>
            <person name="Ansari Y."/>
            <person name="Arakawa T."/>
            <person name="Banh J."/>
            <person name="Banno F."/>
            <person name="Bowser L."/>
            <person name="Brooks S.Y."/>
            <person name="Carninci P."/>
            <person name="Chao Q."/>
            <person name="Choy N."/>
            <person name="Enju A."/>
            <person name="Goldsmith A.D."/>
            <person name="Gurjal M."/>
            <person name="Hansen N.F."/>
            <person name="Hayashizaki Y."/>
            <person name="Johnson-Hopson C."/>
            <person name="Hsuan V.W."/>
            <person name="Iida K."/>
            <person name="Karnes M."/>
            <person name="Khan S."/>
            <person name="Koesema E."/>
            <person name="Ishida J."/>
            <person name="Jiang P.X."/>
            <person name="Jones T."/>
            <person name="Kawai J."/>
            <person name="Kamiya A."/>
            <person name="Meyers C."/>
            <person name="Nakajima M."/>
            <person name="Narusaka M."/>
            <person name="Seki M."/>
            <person name="Sakurai T."/>
            <person name="Satou M."/>
            <person name="Tamse R."/>
            <person name="Vaysberg M."/>
            <person name="Wallender E.K."/>
            <person name="Wong C."/>
            <person name="Yamamura Y."/>
            <person name="Yuan S."/>
            <person name="Shinozaki K."/>
            <person name="Davis R.W."/>
            <person name="Theologis A."/>
            <person name="Ecker J.R."/>
        </authorList>
    </citation>
    <scope>NUCLEOTIDE SEQUENCE [LARGE SCALE MRNA]</scope>
    <source>
        <strain>cv. Columbia</strain>
    </source>
</reference>
<reference key="4">
    <citation type="submission" date="2002-03" db="EMBL/GenBank/DDBJ databases">
        <title>Full-length cDNA from Arabidopsis thaliana.</title>
        <authorList>
            <person name="Brover V.V."/>
            <person name="Troukhan M.E."/>
            <person name="Alexandrov N.A."/>
            <person name="Lu Y.-P."/>
            <person name="Flavell R.B."/>
            <person name="Feldmann K.A."/>
        </authorList>
    </citation>
    <scope>NUCLEOTIDE SEQUENCE [LARGE SCALE MRNA]</scope>
</reference>
<reference key="5">
    <citation type="journal article" date="2002" name="Plant Cell Physiol.">
        <title>The XTH family of enzymes involved in xyloglucan endotransglucosylation and endohydrolysis: current perspectives and a new unifying nomenclature.</title>
        <authorList>
            <person name="Rose J.K.C."/>
            <person name="Braam J."/>
            <person name="Fry S.C."/>
            <person name="Nishitani K."/>
        </authorList>
    </citation>
    <scope>NOMENCLATURE</scope>
</reference>
<protein>
    <recommendedName>
        <fullName>Probable xyloglucan endotransglucosylase/hydrolase protein 7</fullName>
        <shortName>At-XTH7</shortName>
        <shortName>XTH-7</shortName>
        <ecNumber>2.4.1.207</ecNumber>
    </recommendedName>
</protein>
<organism>
    <name type="scientific">Arabidopsis thaliana</name>
    <name type="common">Mouse-ear cress</name>
    <dbReference type="NCBI Taxonomy" id="3702"/>
    <lineage>
        <taxon>Eukaryota</taxon>
        <taxon>Viridiplantae</taxon>
        <taxon>Streptophyta</taxon>
        <taxon>Embryophyta</taxon>
        <taxon>Tracheophyta</taxon>
        <taxon>Spermatophyta</taxon>
        <taxon>Magnoliopsida</taxon>
        <taxon>eudicotyledons</taxon>
        <taxon>Gunneridae</taxon>
        <taxon>Pentapetalae</taxon>
        <taxon>rosids</taxon>
        <taxon>malvids</taxon>
        <taxon>Brassicales</taxon>
        <taxon>Brassicaceae</taxon>
        <taxon>Camelineae</taxon>
        <taxon>Arabidopsis</taxon>
    </lineage>
</organism>
<gene>
    <name type="primary">XTH7</name>
    <name type="synonym">XTR15</name>
    <name type="ordered locus">At4g37800</name>
    <name type="ORF">T28I19.80</name>
</gene>
<name>XTH7_ARATH</name>
<proteinExistence type="evidence at transcript level"/>
<sequence>MVVSLFSSRNVFYTLSLCLFAALYQPVMSRPAKFEDDFRIAWSDTHITQIDGGRAIQLKLDPSSGCGFASKKQYLFGRVSMKIKLIPGDSAGTVTAFYMNSDTDSVRDELDFEFLGNRSGQPYTVQTNVFAHGKGDREQRVNLWFDPSRDFHEYAISWNHLRIVFYVDNVPIRVYKNNEARKVPYPRFQPMGVYSTLWEADDWATRGGIEKINWSRAPFYAYYKDFDIEGCPVPGPADCPANSKNWWEGSAYHQLSPVEARSYRWVRVNHMVYDYCTDKSRFPVPPPECSAGI</sequence>
<feature type="signal peptide" evidence="3">
    <location>
        <begin position="1"/>
        <end position="29"/>
    </location>
</feature>
<feature type="chain" id="PRO_0000011807" description="Probable xyloglucan endotransglucosylase/hydrolase protein 7">
    <location>
        <begin position="30"/>
        <end position="293"/>
    </location>
</feature>
<feature type="domain" description="GH16" evidence="4">
    <location>
        <begin position="30"/>
        <end position="223"/>
    </location>
</feature>
<feature type="active site" description="Nucleophile" evidence="5">
    <location>
        <position position="109"/>
    </location>
</feature>
<feature type="active site" description="Proton donor" evidence="5">
    <location>
        <position position="113"/>
    </location>
</feature>
<feature type="binding site" evidence="2">
    <location>
        <position position="113"/>
    </location>
    <ligand>
        <name>xyloglucan</name>
        <dbReference type="ChEBI" id="CHEBI:18233"/>
    </ligand>
</feature>
<feature type="binding site" evidence="2">
    <location>
        <begin position="126"/>
        <end position="128"/>
    </location>
    <ligand>
        <name>xyloglucan</name>
        <dbReference type="ChEBI" id="CHEBI:18233"/>
    </ligand>
</feature>
<feature type="binding site" evidence="2">
    <location>
        <begin position="136"/>
        <end position="138"/>
    </location>
    <ligand>
        <name>xyloglucan</name>
        <dbReference type="ChEBI" id="CHEBI:18233"/>
    </ligand>
</feature>
<feature type="binding site" evidence="2">
    <location>
        <begin position="202"/>
        <end position="203"/>
    </location>
    <ligand>
        <name>xyloglucan</name>
        <dbReference type="ChEBI" id="CHEBI:18233"/>
    </ligand>
</feature>
<feature type="binding site" evidence="2">
    <location>
        <position position="207"/>
    </location>
    <ligand>
        <name>xyloglucan</name>
        <dbReference type="ChEBI" id="CHEBI:18233"/>
    </ligand>
</feature>
<feature type="binding site" evidence="2">
    <location>
        <position position="281"/>
    </location>
    <ligand>
        <name>xyloglucan</name>
        <dbReference type="ChEBI" id="CHEBI:18233"/>
    </ligand>
</feature>
<feature type="site" description="Important for catalytic activity" evidence="2">
    <location>
        <position position="111"/>
    </location>
</feature>
<feature type="glycosylation site" description="N-linked (GlcNAc...) asparagine" evidence="3">
    <location>
        <position position="117"/>
    </location>
</feature>
<feature type="glycosylation site" description="N-linked (GlcNAc...) asparagine" evidence="3">
    <location>
        <position position="213"/>
    </location>
</feature>
<feature type="disulfide bond" evidence="2">
    <location>
        <begin position="231"/>
        <end position="239"/>
    </location>
</feature>
<feature type="disulfide bond" evidence="2">
    <location>
        <begin position="276"/>
        <end position="289"/>
    </location>
</feature>
<feature type="sequence conflict" description="In Ref. 4; AAM62514." evidence="6" ref="4">
    <original>R</original>
    <variation>I</variation>
    <location>
        <position position="54"/>
    </location>
</feature>
<dbReference type="EC" id="2.4.1.207"/>
<dbReference type="EMBL" id="AL035709">
    <property type="protein sequence ID" value="CAB38928.1"/>
    <property type="molecule type" value="Genomic_DNA"/>
</dbReference>
<dbReference type="EMBL" id="AL161592">
    <property type="protein sequence ID" value="CAB80445.1"/>
    <property type="molecule type" value="Genomic_DNA"/>
</dbReference>
<dbReference type="EMBL" id="CP002687">
    <property type="protein sequence ID" value="AEE86839.1"/>
    <property type="molecule type" value="Genomic_DNA"/>
</dbReference>
<dbReference type="EMBL" id="AY093025">
    <property type="protein sequence ID" value="AAM13024.1"/>
    <property type="molecule type" value="mRNA"/>
</dbReference>
<dbReference type="EMBL" id="AY128926">
    <property type="protein sequence ID" value="AAM91326.1"/>
    <property type="molecule type" value="mRNA"/>
</dbReference>
<dbReference type="EMBL" id="AY085282">
    <property type="protein sequence ID" value="AAM62514.1"/>
    <property type="molecule type" value="mRNA"/>
</dbReference>
<dbReference type="PIR" id="T06027">
    <property type="entry name" value="T06027"/>
</dbReference>
<dbReference type="RefSeq" id="NP_195494.1">
    <property type="nucleotide sequence ID" value="NM_119942.3"/>
</dbReference>
<dbReference type="SMR" id="Q8LER3"/>
<dbReference type="BioGRID" id="15217">
    <property type="interactions" value="1"/>
</dbReference>
<dbReference type="FunCoup" id="Q8LER3">
    <property type="interactions" value="58"/>
</dbReference>
<dbReference type="STRING" id="3702.Q8LER3"/>
<dbReference type="CAZy" id="GH16">
    <property type="family name" value="Glycoside Hydrolase Family 16"/>
</dbReference>
<dbReference type="GlyCosmos" id="Q8LER3">
    <property type="glycosylation" value="2 sites, No reported glycans"/>
</dbReference>
<dbReference type="GlyGen" id="Q8LER3">
    <property type="glycosylation" value="2 sites"/>
</dbReference>
<dbReference type="PaxDb" id="3702-AT4G37800.1"/>
<dbReference type="ProteomicsDB" id="243174"/>
<dbReference type="EnsemblPlants" id="AT4G37800.1">
    <property type="protein sequence ID" value="AT4G37800.1"/>
    <property type="gene ID" value="AT4G37800"/>
</dbReference>
<dbReference type="GeneID" id="829936"/>
<dbReference type="Gramene" id="AT4G37800.1">
    <property type="protein sequence ID" value="AT4G37800.1"/>
    <property type="gene ID" value="AT4G37800"/>
</dbReference>
<dbReference type="KEGG" id="ath:AT4G37800"/>
<dbReference type="Araport" id="AT4G37800"/>
<dbReference type="TAIR" id="AT4G37800">
    <property type="gene designation" value="XTH7"/>
</dbReference>
<dbReference type="eggNOG" id="ENOG502QSMA">
    <property type="taxonomic scope" value="Eukaryota"/>
</dbReference>
<dbReference type="HOGENOM" id="CLU_048041_2_1_1"/>
<dbReference type="InParanoid" id="Q8LER3"/>
<dbReference type="OMA" id="WWEGASY"/>
<dbReference type="PhylomeDB" id="Q8LER3"/>
<dbReference type="BioCyc" id="ARA:AT4G37800-MONOMER"/>
<dbReference type="PRO" id="PR:Q8LER3"/>
<dbReference type="Proteomes" id="UP000006548">
    <property type="component" value="Chromosome 4"/>
</dbReference>
<dbReference type="ExpressionAtlas" id="Q8LER3">
    <property type="expression patterns" value="baseline and differential"/>
</dbReference>
<dbReference type="GO" id="GO:0048046">
    <property type="term" value="C:apoplast"/>
    <property type="evidence" value="ECO:0007669"/>
    <property type="project" value="UniProtKB-SubCell"/>
</dbReference>
<dbReference type="GO" id="GO:0004553">
    <property type="term" value="F:hydrolase activity, hydrolyzing O-glycosyl compounds"/>
    <property type="evidence" value="ECO:0007669"/>
    <property type="project" value="InterPro"/>
</dbReference>
<dbReference type="GO" id="GO:0030247">
    <property type="term" value="F:polysaccharide binding"/>
    <property type="evidence" value="ECO:0000250"/>
    <property type="project" value="UniProtKB"/>
</dbReference>
<dbReference type="GO" id="GO:0016762">
    <property type="term" value="F:xyloglucan:xyloglucosyl transferase activity"/>
    <property type="evidence" value="ECO:0007669"/>
    <property type="project" value="UniProtKB-EC"/>
</dbReference>
<dbReference type="GO" id="GO:0042546">
    <property type="term" value="P:cell wall biogenesis"/>
    <property type="evidence" value="ECO:0007669"/>
    <property type="project" value="InterPro"/>
</dbReference>
<dbReference type="GO" id="GO:0071555">
    <property type="term" value="P:cell wall organization"/>
    <property type="evidence" value="ECO:0007669"/>
    <property type="project" value="UniProtKB-KW"/>
</dbReference>
<dbReference type="GO" id="GO:0010411">
    <property type="term" value="P:xyloglucan metabolic process"/>
    <property type="evidence" value="ECO:0007669"/>
    <property type="project" value="InterPro"/>
</dbReference>
<dbReference type="CDD" id="cd02176">
    <property type="entry name" value="GH16_XET"/>
    <property type="match status" value="1"/>
</dbReference>
<dbReference type="FunFam" id="2.60.120.200:FF:000025">
    <property type="entry name" value="Xyloglucan endotransglucosylase/hydrolase"/>
    <property type="match status" value="1"/>
</dbReference>
<dbReference type="Gene3D" id="2.60.120.200">
    <property type="match status" value="1"/>
</dbReference>
<dbReference type="InterPro" id="IPR044791">
    <property type="entry name" value="Beta-glucanase/XTH"/>
</dbReference>
<dbReference type="InterPro" id="IPR013320">
    <property type="entry name" value="ConA-like_dom_sf"/>
</dbReference>
<dbReference type="InterPro" id="IPR000757">
    <property type="entry name" value="GH16"/>
</dbReference>
<dbReference type="InterPro" id="IPR008263">
    <property type="entry name" value="GH16_AS"/>
</dbReference>
<dbReference type="InterPro" id="IPR010713">
    <property type="entry name" value="XET_C"/>
</dbReference>
<dbReference type="InterPro" id="IPR016455">
    <property type="entry name" value="XTH"/>
</dbReference>
<dbReference type="PANTHER" id="PTHR31062">
    <property type="entry name" value="XYLOGLUCAN ENDOTRANSGLUCOSYLASE/HYDROLASE PROTEIN 8-RELATED"/>
    <property type="match status" value="1"/>
</dbReference>
<dbReference type="Pfam" id="PF00722">
    <property type="entry name" value="Glyco_hydro_16"/>
    <property type="match status" value="1"/>
</dbReference>
<dbReference type="Pfam" id="PF06955">
    <property type="entry name" value="XET_C"/>
    <property type="match status" value="1"/>
</dbReference>
<dbReference type="PIRSF" id="PIRSF005604">
    <property type="entry name" value="XET"/>
    <property type="match status" value="1"/>
</dbReference>
<dbReference type="SUPFAM" id="SSF49899">
    <property type="entry name" value="Concanavalin A-like lectins/glucanases"/>
    <property type="match status" value="1"/>
</dbReference>
<dbReference type="PROSITE" id="PS01034">
    <property type="entry name" value="GH16_1"/>
    <property type="match status" value="1"/>
</dbReference>
<dbReference type="PROSITE" id="PS51762">
    <property type="entry name" value="GH16_2"/>
    <property type="match status" value="1"/>
</dbReference>
<evidence type="ECO:0000250" key="1"/>
<evidence type="ECO:0000250" key="2">
    <source>
        <dbReference type="UniProtKB" id="Q8GZD5"/>
    </source>
</evidence>
<evidence type="ECO:0000255" key="3"/>
<evidence type="ECO:0000255" key="4">
    <source>
        <dbReference type="PROSITE-ProRule" id="PRU01098"/>
    </source>
</evidence>
<evidence type="ECO:0000255" key="5">
    <source>
        <dbReference type="PROSITE-ProRule" id="PRU10064"/>
    </source>
</evidence>
<evidence type="ECO:0000305" key="6"/>
<comment type="function">
    <text evidence="1">Catalyzes xyloglucan endohydrolysis (XEH) and/or endotransglycosylation (XET). Cleaves and religates xyloglucan polymers, an essential constituent of the primary cell wall, and thereby participates in cell wall construction of growing tissues (By similarity).</text>
</comment>
<comment type="catalytic activity">
    <reaction>
        <text>breaks a beta-(1-&gt;4) bond in the backbone of a xyloglucan and transfers the xyloglucanyl segment on to O-4 of the non-reducing terminal glucose residue of an acceptor, which can be a xyloglucan or an oligosaccharide of xyloglucan.</text>
        <dbReference type="EC" id="2.4.1.207"/>
    </reaction>
</comment>
<comment type="subcellular location">
    <subcellularLocation>
        <location evidence="6">Secreted</location>
        <location evidence="6">Cell wall</location>
    </subcellularLocation>
    <subcellularLocation>
        <location evidence="6">Secreted</location>
        <location evidence="6">Extracellular space</location>
        <location evidence="6">Apoplast</location>
    </subcellularLocation>
</comment>
<comment type="PTM">
    <text evidence="1">Contains at least one intrachain disulfide bond essential for its enzymatic activity.</text>
</comment>
<comment type="similarity">
    <text evidence="6">Belongs to the glycosyl hydrolase 16 family. XTH group 1 subfamily.</text>
</comment>